<keyword id="KW-0004">4Fe-4S</keyword>
<keyword id="KW-0067">ATP-binding</keyword>
<keyword id="KW-0963">Cytoplasm</keyword>
<keyword id="KW-0408">Iron</keyword>
<keyword id="KW-0411">Iron-sulfur</keyword>
<keyword id="KW-0479">Metal-binding</keyword>
<keyword id="KW-0547">Nucleotide-binding</keyword>
<sequence length="336" mass="35783">MIATQRPFPIPSPVPLAPSSTVLPTTVPENAPEHCPGVESSQAGKADACEGCPNQSVCAEGPKGPDPDLPLIRERMSSVRRKILVLSGKGGVGKSTFTAGLSWALAADEECQAGIMDIDICGPSIPLLMGLESSTIHTSASGWSPAYALDNLAVMSIGFLLPSSSDAVIWRGPKKNGLIKQFLKDVEWGDLDYMVVDTPPGTSDEHLSIVQYLKEAGIDGAVLVTTPQEVALQDVRKEIDFCKKVGIPILGLVENMSGFVCPNCKNESQIFAPTTGGAEAMGKELGIELLGKVPLDPRIGMTCDQGMSFLDEYPESPATMAYLDIVQRIREILDDE</sequence>
<reference key="1">
    <citation type="journal article" date="2005" name="Science">
        <title>The genome of the basidiomycetous yeast and human pathogen Cryptococcus neoformans.</title>
        <authorList>
            <person name="Loftus B.J."/>
            <person name="Fung E."/>
            <person name="Roncaglia P."/>
            <person name="Rowley D."/>
            <person name="Amedeo P."/>
            <person name="Bruno D."/>
            <person name="Vamathevan J."/>
            <person name="Miranda M."/>
            <person name="Anderson I.J."/>
            <person name="Fraser J.A."/>
            <person name="Allen J.E."/>
            <person name="Bosdet I.E."/>
            <person name="Brent M.R."/>
            <person name="Chiu R."/>
            <person name="Doering T.L."/>
            <person name="Donlin M.J."/>
            <person name="D'Souza C.A."/>
            <person name="Fox D.S."/>
            <person name="Grinberg V."/>
            <person name="Fu J."/>
            <person name="Fukushima M."/>
            <person name="Haas B.J."/>
            <person name="Huang J.C."/>
            <person name="Janbon G."/>
            <person name="Jones S.J.M."/>
            <person name="Koo H.L."/>
            <person name="Krzywinski M.I."/>
            <person name="Kwon-Chung K.J."/>
            <person name="Lengeler K.B."/>
            <person name="Maiti R."/>
            <person name="Marra M.A."/>
            <person name="Marra R.E."/>
            <person name="Mathewson C.A."/>
            <person name="Mitchell T.G."/>
            <person name="Pertea M."/>
            <person name="Riggs F.R."/>
            <person name="Salzberg S.L."/>
            <person name="Schein J.E."/>
            <person name="Shvartsbeyn A."/>
            <person name="Shin H."/>
            <person name="Shumway M."/>
            <person name="Specht C.A."/>
            <person name="Suh B.B."/>
            <person name="Tenney A."/>
            <person name="Utterback T.R."/>
            <person name="Wickes B.L."/>
            <person name="Wortman J.R."/>
            <person name="Wye N.H."/>
            <person name="Kronstad J.W."/>
            <person name="Lodge J.K."/>
            <person name="Heitman J."/>
            <person name="Davis R.W."/>
            <person name="Fraser C.M."/>
            <person name="Hyman R.W."/>
        </authorList>
    </citation>
    <scope>NUCLEOTIDE SEQUENCE [LARGE SCALE GENOMIC DNA]</scope>
    <source>
        <strain>B-3501A</strain>
    </source>
</reference>
<dbReference type="EMBL" id="AAEY01000025">
    <property type="protein sequence ID" value="EAL20644.1"/>
    <property type="molecule type" value="Genomic_DNA"/>
</dbReference>
<dbReference type="RefSeq" id="XP_775291.1">
    <property type="nucleotide sequence ID" value="XM_770198.1"/>
</dbReference>
<dbReference type="SMR" id="P0CO89"/>
<dbReference type="EnsemblFungi" id="AAW43552">
    <property type="protein sequence ID" value="AAW43552"/>
    <property type="gene ID" value="CNE03090"/>
</dbReference>
<dbReference type="GeneID" id="4936319"/>
<dbReference type="KEGG" id="cnb:CNBE3090"/>
<dbReference type="VEuPathDB" id="FungiDB:CNBE3090"/>
<dbReference type="HOGENOM" id="CLU_024839_0_1_1"/>
<dbReference type="OrthoDB" id="368at5206"/>
<dbReference type="GO" id="GO:0005829">
    <property type="term" value="C:cytosol"/>
    <property type="evidence" value="ECO:0007669"/>
    <property type="project" value="TreeGrafter"/>
</dbReference>
<dbReference type="GO" id="GO:0051539">
    <property type="term" value="F:4 iron, 4 sulfur cluster binding"/>
    <property type="evidence" value="ECO:0007669"/>
    <property type="project" value="UniProtKB-UniRule"/>
</dbReference>
<dbReference type="GO" id="GO:0005524">
    <property type="term" value="F:ATP binding"/>
    <property type="evidence" value="ECO:0007669"/>
    <property type="project" value="UniProtKB-KW"/>
</dbReference>
<dbReference type="GO" id="GO:0140663">
    <property type="term" value="F:ATP-dependent FeS chaperone activity"/>
    <property type="evidence" value="ECO:0007669"/>
    <property type="project" value="InterPro"/>
</dbReference>
<dbReference type="GO" id="GO:0046872">
    <property type="term" value="F:metal ion binding"/>
    <property type="evidence" value="ECO:0007669"/>
    <property type="project" value="UniProtKB-KW"/>
</dbReference>
<dbReference type="GO" id="GO:0016226">
    <property type="term" value="P:iron-sulfur cluster assembly"/>
    <property type="evidence" value="ECO:0007669"/>
    <property type="project" value="UniProtKB-UniRule"/>
</dbReference>
<dbReference type="CDD" id="cd02037">
    <property type="entry name" value="Mrp_NBP35"/>
    <property type="match status" value="1"/>
</dbReference>
<dbReference type="FunFam" id="3.40.50.300:FF:000427">
    <property type="entry name" value="Cytosolic Fe-S cluster assembly factor NUBP1"/>
    <property type="match status" value="1"/>
</dbReference>
<dbReference type="Gene3D" id="3.40.50.300">
    <property type="entry name" value="P-loop containing nucleotide triphosphate hydrolases"/>
    <property type="match status" value="1"/>
</dbReference>
<dbReference type="HAMAP" id="MF_02040">
    <property type="entry name" value="Mrp_NBP35"/>
    <property type="match status" value="1"/>
</dbReference>
<dbReference type="HAMAP" id="MF_03038">
    <property type="entry name" value="NUBP1"/>
    <property type="match status" value="1"/>
</dbReference>
<dbReference type="InterPro" id="IPR000808">
    <property type="entry name" value="Mrp-like_CS"/>
</dbReference>
<dbReference type="InterPro" id="IPR019591">
    <property type="entry name" value="Mrp/NBP35_ATP-bd"/>
</dbReference>
<dbReference type="InterPro" id="IPR028601">
    <property type="entry name" value="NUBP1/Nbp35"/>
</dbReference>
<dbReference type="InterPro" id="IPR027417">
    <property type="entry name" value="P-loop_NTPase"/>
</dbReference>
<dbReference type="InterPro" id="IPR033756">
    <property type="entry name" value="YlxH/NBP35"/>
</dbReference>
<dbReference type="PANTHER" id="PTHR23264:SF35">
    <property type="entry name" value="CYTOSOLIC FE-S CLUSTER ASSEMBLY FACTOR NUBP1"/>
    <property type="match status" value="1"/>
</dbReference>
<dbReference type="PANTHER" id="PTHR23264">
    <property type="entry name" value="NUCLEOTIDE-BINDING PROTEIN NBP35 YEAST -RELATED"/>
    <property type="match status" value="1"/>
</dbReference>
<dbReference type="Pfam" id="PF10609">
    <property type="entry name" value="ParA"/>
    <property type="match status" value="1"/>
</dbReference>
<dbReference type="SUPFAM" id="SSF52540">
    <property type="entry name" value="P-loop containing nucleoside triphosphate hydrolases"/>
    <property type="match status" value="1"/>
</dbReference>
<dbReference type="PROSITE" id="PS01215">
    <property type="entry name" value="MRP"/>
    <property type="match status" value="1"/>
</dbReference>
<name>NBP35_CRYNB</name>
<protein>
    <recommendedName>
        <fullName evidence="1">Cytosolic Fe-S cluster assembly factor NBP35</fullName>
    </recommendedName>
    <alternativeName>
        <fullName evidence="1">Nucleotide-binding protein 35</fullName>
    </alternativeName>
</protein>
<comment type="function">
    <text evidence="1">Component of the cytosolic iron-sulfur (Fe/S) protein assembly (CIA) machinery. Required for maturation of extramitochondrial Fe-S proteins. The NBP35-CFD1 heterotetramer forms a Fe-S scaffold complex, mediating the de novo assembly of an Fe-S cluster and its transfer to target apoproteins.</text>
</comment>
<comment type="cofactor">
    <cofactor evidence="1">
        <name>[4Fe-4S] cluster</name>
        <dbReference type="ChEBI" id="CHEBI:49883"/>
    </cofactor>
    <text evidence="1">Binds 4 [4Fe-4S] clusters per heterotetramer. Contains two stable clusters in the N-termini of NBP35 and two labile, bridging clusters between subunits of the NBP35-CFD1 heterotetramer.</text>
</comment>
<comment type="subunit">
    <text evidence="1">Heterotetramer of 2 NBP35 and 2 CFD1 chains.</text>
</comment>
<comment type="subcellular location">
    <subcellularLocation>
        <location evidence="1">Cytoplasm</location>
    </subcellularLocation>
</comment>
<comment type="similarity">
    <text evidence="1">Belongs to the Mrp/NBP35 ATP-binding proteins family. NUBP1/NBP35 subfamily.</text>
</comment>
<organism>
    <name type="scientific">Cryptococcus neoformans var. neoformans serotype D (strain B-3501A)</name>
    <name type="common">Filobasidiella neoformans</name>
    <dbReference type="NCBI Taxonomy" id="283643"/>
    <lineage>
        <taxon>Eukaryota</taxon>
        <taxon>Fungi</taxon>
        <taxon>Dikarya</taxon>
        <taxon>Basidiomycota</taxon>
        <taxon>Agaricomycotina</taxon>
        <taxon>Tremellomycetes</taxon>
        <taxon>Tremellales</taxon>
        <taxon>Cryptococcaceae</taxon>
        <taxon>Cryptococcus</taxon>
        <taxon>Cryptococcus neoformans species complex</taxon>
    </lineage>
</organism>
<feature type="chain" id="PRO_0000410151" description="Cytosolic Fe-S cluster assembly factor NBP35">
    <location>
        <begin position="1"/>
        <end position="336"/>
    </location>
</feature>
<feature type="region of interest" description="Disordered" evidence="2">
    <location>
        <begin position="1"/>
        <end position="20"/>
    </location>
</feature>
<feature type="binding site" evidence="1">
    <location>
        <position position="35"/>
    </location>
    <ligand>
        <name>[4Fe-4S] cluster</name>
        <dbReference type="ChEBI" id="CHEBI:49883"/>
        <label>1</label>
    </ligand>
</feature>
<feature type="binding site" evidence="1">
    <location>
        <position position="49"/>
    </location>
    <ligand>
        <name>[4Fe-4S] cluster</name>
        <dbReference type="ChEBI" id="CHEBI:49883"/>
        <label>1</label>
    </ligand>
</feature>
<feature type="binding site" evidence="1">
    <location>
        <position position="52"/>
    </location>
    <ligand>
        <name>[4Fe-4S] cluster</name>
        <dbReference type="ChEBI" id="CHEBI:49883"/>
        <label>1</label>
    </ligand>
</feature>
<feature type="binding site" evidence="1">
    <location>
        <position position="58"/>
    </location>
    <ligand>
        <name>[4Fe-4S] cluster</name>
        <dbReference type="ChEBI" id="CHEBI:49883"/>
        <label>1</label>
    </ligand>
</feature>
<feature type="binding site" evidence="1">
    <location>
        <begin position="88"/>
        <end position="95"/>
    </location>
    <ligand>
        <name>ATP</name>
        <dbReference type="ChEBI" id="CHEBI:30616"/>
    </ligand>
</feature>
<feature type="binding site" evidence="1">
    <location>
        <position position="261"/>
    </location>
    <ligand>
        <name>[4Fe-4S] cluster</name>
        <dbReference type="ChEBI" id="CHEBI:49883"/>
        <label>2</label>
        <note>ligand shared with heterodimeric partner</note>
    </ligand>
</feature>
<feature type="binding site" evidence="1">
    <location>
        <position position="264"/>
    </location>
    <ligand>
        <name>[4Fe-4S] cluster</name>
        <dbReference type="ChEBI" id="CHEBI:49883"/>
        <label>2</label>
        <note>ligand shared with heterodimeric partner</note>
    </ligand>
</feature>
<evidence type="ECO:0000255" key="1">
    <source>
        <dbReference type="HAMAP-Rule" id="MF_03038"/>
    </source>
</evidence>
<evidence type="ECO:0000256" key="2">
    <source>
        <dbReference type="SAM" id="MobiDB-lite"/>
    </source>
</evidence>
<accession>P0CO89</accession>
<accession>Q55S73</accession>
<accession>Q5KGM5</accession>
<proteinExistence type="inferred from homology"/>
<gene>
    <name evidence="1" type="primary">NBP35</name>
    <name type="ordered locus">CNBE3090</name>
</gene>